<keyword id="KW-0315">Glutamine amidotransferase</keyword>
<keyword id="KW-0378">Hydrolase</keyword>
<keyword id="KW-0456">Lyase</keyword>
<keyword id="KW-0663">Pyridoxal phosphate</keyword>
<keyword id="KW-1185">Reference proteome</keyword>
<proteinExistence type="inferred from homology"/>
<dbReference type="EC" id="4.3.3.6" evidence="1"/>
<dbReference type="EC" id="3.5.1.2" evidence="1"/>
<dbReference type="EMBL" id="CP000102">
    <property type="protein sequence ID" value="ABC57069.1"/>
    <property type="molecule type" value="Genomic_DNA"/>
</dbReference>
<dbReference type="RefSeq" id="WP_011406269.1">
    <property type="nucleotide sequence ID" value="NC_007681.1"/>
</dbReference>
<dbReference type="SMR" id="Q2NGI4"/>
<dbReference type="STRING" id="339860.Msp_0671"/>
<dbReference type="MEROPS" id="C26.A32"/>
<dbReference type="GeneID" id="41325246"/>
<dbReference type="KEGG" id="mst:Msp_0671"/>
<dbReference type="eggNOG" id="arCOG00034">
    <property type="taxonomic scope" value="Archaea"/>
</dbReference>
<dbReference type="HOGENOM" id="CLU_069674_2_0_2"/>
<dbReference type="OrthoDB" id="26717at2157"/>
<dbReference type="UniPathway" id="UPA00245"/>
<dbReference type="Proteomes" id="UP000001931">
    <property type="component" value="Chromosome"/>
</dbReference>
<dbReference type="GO" id="GO:0005829">
    <property type="term" value="C:cytosol"/>
    <property type="evidence" value="ECO:0007669"/>
    <property type="project" value="TreeGrafter"/>
</dbReference>
<dbReference type="GO" id="GO:1903600">
    <property type="term" value="C:glutaminase complex"/>
    <property type="evidence" value="ECO:0007669"/>
    <property type="project" value="TreeGrafter"/>
</dbReference>
<dbReference type="GO" id="GO:0004359">
    <property type="term" value="F:glutaminase activity"/>
    <property type="evidence" value="ECO:0007669"/>
    <property type="project" value="UniProtKB-UniRule"/>
</dbReference>
<dbReference type="GO" id="GO:0036381">
    <property type="term" value="F:pyridoxal 5'-phosphate synthase (glutamine hydrolysing) activity"/>
    <property type="evidence" value="ECO:0007669"/>
    <property type="project" value="UniProtKB-UniRule"/>
</dbReference>
<dbReference type="GO" id="GO:0006543">
    <property type="term" value="P:glutamine catabolic process"/>
    <property type="evidence" value="ECO:0007669"/>
    <property type="project" value="UniProtKB-UniRule"/>
</dbReference>
<dbReference type="GO" id="GO:0042823">
    <property type="term" value="P:pyridoxal phosphate biosynthetic process"/>
    <property type="evidence" value="ECO:0007669"/>
    <property type="project" value="UniProtKB-UniRule"/>
</dbReference>
<dbReference type="GO" id="GO:0008614">
    <property type="term" value="P:pyridoxine metabolic process"/>
    <property type="evidence" value="ECO:0007669"/>
    <property type="project" value="TreeGrafter"/>
</dbReference>
<dbReference type="CDD" id="cd01749">
    <property type="entry name" value="GATase1_PB"/>
    <property type="match status" value="1"/>
</dbReference>
<dbReference type="Gene3D" id="3.40.50.880">
    <property type="match status" value="1"/>
</dbReference>
<dbReference type="HAMAP" id="MF_01615">
    <property type="entry name" value="PdxT"/>
    <property type="match status" value="1"/>
</dbReference>
<dbReference type="InterPro" id="IPR029062">
    <property type="entry name" value="Class_I_gatase-like"/>
</dbReference>
<dbReference type="InterPro" id="IPR002161">
    <property type="entry name" value="PdxT/SNO"/>
</dbReference>
<dbReference type="NCBIfam" id="TIGR03800">
    <property type="entry name" value="PLP_synth_Pdx2"/>
    <property type="match status" value="1"/>
</dbReference>
<dbReference type="PANTHER" id="PTHR31559">
    <property type="entry name" value="PYRIDOXAL 5'-PHOSPHATE SYNTHASE SUBUNIT SNO"/>
    <property type="match status" value="1"/>
</dbReference>
<dbReference type="PANTHER" id="PTHR31559:SF0">
    <property type="entry name" value="PYRIDOXAL 5'-PHOSPHATE SYNTHASE SUBUNIT SNO1-RELATED"/>
    <property type="match status" value="1"/>
</dbReference>
<dbReference type="Pfam" id="PF01174">
    <property type="entry name" value="SNO"/>
    <property type="match status" value="1"/>
</dbReference>
<dbReference type="PIRSF" id="PIRSF005639">
    <property type="entry name" value="Glut_amidoT_SNO"/>
    <property type="match status" value="1"/>
</dbReference>
<dbReference type="SUPFAM" id="SSF52317">
    <property type="entry name" value="Class I glutamine amidotransferase-like"/>
    <property type="match status" value="1"/>
</dbReference>
<dbReference type="PROSITE" id="PS51130">
    <property type="entry name" value="PDXT_SNO_2"/>
    <property type="match status" value="1"/>
</dbReference>
<accession>Q2NGI4</accession>
<evidence type="ECO:0000255" key="1">
    <source>
        <dbReference type="HAMAP-Rule" id="MF_01615"/>
    </source>
</evidence>
<name>PDXT_METST</name>
<feature type="chain" id="PRO_0000293021" description="Pyridoxal 5'-phosphate synthase subunit PdxT">
    <location>
        <begin position="1"/>
        <end position="192"/>
    </location>
</feature>
<feature type="active site" description="Nucleophile" evidence="1">
    <location>
        <position position="82"/>
    </location>
</feature>
<feature type="active site" description="Charge relay system" evidence="1">
    <location>
        <position position="170"/>
    </location>
</feature>
<feature type="active site" description="Charge relay system" evidence="1">
    <location>
        <position position="172"/>
    </location>
</feature>
<feature type="binding site" evidence="1">
    <location>
        <begin position="53"/>
        <end position="55"/>
    </location>
    <ligand>
        <name>L-glutamine</name>
        <dbReference type="ChEBI" id="CHEBI:58359"/>
    </ligand>
</feature>
<feature type="binding site" evidence="1">
    <location>
        <position position="108"/>
    </location>
    <ligand>
        <name>L-glutamine</name>
        <dbReference type="ChEBI" id="CHEBI:58359"/>
    </ligand>
</feature>
<feature type="binding site" evidence="1">
    <location>
        <begin position="134"/>
        <end position="135"/>
    </location>
    <ligand>
        <name>L-glutamine</name>
        <dbReference type="ChEBI" id="CHEBI:58359"/>
    </ligand>
</feature>
<comment type="function">
    <text evidence="1">Catalyzes the hydrolysis of glutamine to glutamate and ammonia as part of the biosynthesis of pyridoxal 5'-phosphate. The resulting ammonia molecule is channeled to the active site of PdxS.</text>
</comment>
<comment type="catalytic activity">
    <reaction evidence="1">
        <text>aldehydo-D-ribose 5-phosphate + D-glyceraldehyde 3-phosphate + L-glutamine = pyridoxal 5'-phosphate + L-glutamate + phosphate + 3 H2O + H(+)</text>
        <dbReference type="Rhea" id="RHEA:31507"/>
        <dbReference type="ChEBI" id="CHEBI:15377"/>
        <dbReference type="ChEBI" id="CHEBI:15378"/>
        <dbReference type="ChEBI" id="CHEBI:29985"/>
        <dbReference type="ChEBI" id="CHEBI:43474"/>
        <dbReference type="ChEBI" id="CHEBI:58273"/>
        <dbReference type="ChEBI" id="CHEBI:58359"/>
        <dbReference type="ChEBI" id="CHEBI:59776"/>
        <dbReference type="ChEBI" id="CHEBI:597326"/>
        <dbReference type="EC" id="4.3.3.6"/>
    </reaction>
</comment>
<comment type="catalytic activity">
    <reaction evidence="1">
        <text>L-glutamine + H2O = L-glutamate + NH4(+)</text>
        <dbReference type="Rhea" id="RHEA:15889"/>
        <dbReference type="ChEBI" id="CHEBI:15377"/>
        <dbReference type="ChEBI" id="CHEBI:28938"/>
        <dbReference type="ChEBI" id="CHEBI:29985"/>
        <dbReference type="ChEBI" id="CHEBI:58359"/>
        <dbReference type="EC" id="3.5.1.2"/>
    </reaction>
</comment>
<comment type="pathway">
    <text evidence="1">Cofactor biosynthesis; pyridoxal 5'-phosphate biosynthesis.</text>
</comment>
<comment type="subunit">
    <text evidence="1">In the presence of PdxS, forms a dodecamer of heterodimers. Only shows activity in the heterodimer.</text>
</comment>
<comment type="similarity">
    <text evidence="1">Belongs to the glutaminase PdxT/SNO family.</text>
</comment>
<gene>
    <name evidence="1" type="primary">pdxT</name>
    <name type="ordered locus">Msp_0671</name>
</gene>
<organism>
    <name type="scientific">Methanosphaera stadtmanae (strain ATCC 43021 / DSM 3091 / JCM 11832 / MCB-3)</name>
    <dbReference type="NCBI Taxonomy" id="339860"/>
    <lineage>
        <taxon>Archaea</taxon>
        <taxon>Methanobacteriati</taxon>
        <taxon>Methanobacteriota</taxon>
        <taxon>Methanomada group</taxon>
        <taxon>Methanobacteria</taxon>
        <taxon>Methanobacteriales</taxon>
        <taxon>Methanobacteriaceae</taxon>
        <taxon>Methanosphaera</taxon>
    </lineage>
</organism>
<sequence>MITIGILDLQGDVEEHQIITEKALKEMKIDGTTKLVNTLDDIKDCNGLIISGGESSTIGMHLEKTGLSNYLKETGIPILGTCAGLVLLSKKTDQDQPLLGLIDSTVKRNGFGRQRMSFESEIKFNNEDYHGIFIRAPYISQISDDVEVLSKYDDKIIAVKQNQYIGIAFHPELTEDTLIHKLFILEVESCVV</sequence>
<reference key="1">
    <citation type="journal article" date="2006" name="J. Bacteriol.">
        <title>The genome sequence of Methanosphaera stadtmanae reveals why this human intestinal archaeon is restricted to methanol and H2 for methane formation and ATP synthesis.</title>
        <authorList>
            <person name="Fricke W.F."/>
            <person name="Seedorf H."/>
            <person name="Henne A."/>
            <person name="Kruer M."/>
            <person name="Liesegang H."/>
            <person name="Hedderich R."/>
            <person name="Gottschalk G."/>
            <person name="Thauer R.K."/>
        </authorList>
    </citation>
    <scope>NUCLEOTIDE SEQUENCE [LARGE SCALE GENOMIC DNA]</scope>
    <source>
        <strain>ATCC 43021 / DSM 3091 / JCM 11832 / MCB-3</strain>
    </source>
</reference>
<protein>
    <recommendedName>
        <fullName evidence="1">Pyridoxal 5'-phosphate synthase subunit PdxT</fullName>
        <ecNumber evidence="1">4.3.3.6</ecNumber>
    </recommendedName>
    <alternativeName>
        <fullName evidence="1">Pdx2</fullName>
    </alternativeName>
    <alternativeName>
        <fullName evidence="1">Pyridoxal 5'-phosphate synthase glutaminase subunit</fullName>
        <ecNumber evidence="1">3.5.1.2</ecNumber>
    </alternativeName>
</protein>